<evidence type="ECO:0000255" key="1">
    <source>
        <dbReference type="HAMAP-Rule" id="MF_00382"/>
    </source>
</evidence>
<evidence type="ECO:0000305" key="2"/>
<keyword id="KW-0002">3D-structure</keyword>
<keyword id="KW-0687">Ribonucleoprotein</keyword>
<keyword id="KW-0689">Ribosomal protein</keyword>
<keyword id="KW-0694">RNA-binding</keyword>
<keyword id="KW-0699">rRNA-binding</keyword>
<gene>
    <name evidence="1" type="primary">rplT</name>
    <name type="ordered locus">SAB1538c</name>
</gene>
<proteinExistence type="evidence at protein level"/>
<reference key="1">
    <citation type="journal article" date="2007" name="PLoS ONE">
        <title>Molecular correlates of host specialization in Staphylococcus aureus.</title>
        <authorList>
            <person name="Herron-Olson L."/>
            <person name="Fitzgerald J.R."/>
            <person name="Musser J.M."/>
            <person name="Kapur V."/>
        </authorList>
    </citation>
    <scope>NUCLEOTIDE SEQUENCE [LARGE SCALE GENOMIC DNA]</scope>
    <source>
        <strain>bovine RF122 / ET3-1</strain>
    </source>
</reference>
<feature type="chain" id="PRO_0000243739" description="Large ribosomal subunit protein bL20">
    <location>
        <begin position="1"/>
        <end position="118"/>
    </location>
</feature>
<comment type="function">
    <text evidence="1">Binds directly to 23S ribosomal RNA and is necessary for the in vitro assembly process of the 50S ribosomal subunit. It is not involved in the protein synthesizing functions of that subunit.</text>
</comment>
<comment type="similarity">
    <text evidence="1">Belongs to the bacterial ribosomal protein bL20 family.</text>
</comment>
<organism>
    <name type="scientific">Staphylococcus aureus (strain bovine RF122 / ET3-1)</name>
    <dbReference type="NCBI Taxonomy" id="273036"/>
    <lineage>
        <taxon>Bacteria</taxon>
        <taxon>Bacillati</taxon>
        <taxon>Bacillota</taxon>
        <taxon>Bacilli</taxon>
        <taxon>Bacillales</taxon>
        <taxon>Staphylococcaceae</taxon>
        <taxon>Staphylococcus</taxon>
    </lineage>
</organism>
<accession>Q2YTB1</accession>
<name>RL20_STAAB</name>
<dbReference type="EMBL" id="AJ938182">
    <property type="protein sequence ID" value="CAI81227.1"/>
    <property type="molecule type" value="Genomic_DNA"/>
</dbReference>
<dbReference type="RefSeq" id="WP_001138360.1">
    <property type="nucleotide sequence ID" value="NC_007622.1"/>
</dbReference>
<dbReference type="PDB" id="6FXC">
    <property type="method" value="EM"/>
    <property type="resolution" value="6.76 A"/>
    <property type="chains" value="AO/BO=2-117"/>
</dbReference>
<dbReference type="PDBsum" id="6FXC"/>
<dbReference type="EMDB" id="EMD-0243"/>
<dbReference type="EMDB" id="EMD-3637"/>
<dbReference type="SMR" id="Q2YTB1"/>
<dbReference type="GeneID" id="98346040"/>
<dbReference type="KEGG" id="sab:SAB1538c"/>
<dbReference type="HOGENOM" id="CLU_123265_0_1_9"/>
<dbReference type="GO" id="GO:1990904">
    <property type="term" value="C:ribonucleoprotein complex"/>
    <property type="evidence" value="ECO:0007669"/>
    <property type="project" value="UniProtKB-KW"/>
</dbReference>
<dbReference type="GO" id="GO:0005840">
    <property type="term" value="C:ribosome"/>
    <property type="evidence" value="ECO:0007669"/>
    <property type="project" value="UniProtKB-KW"/>
</dbReference>
<dbReference type="GO" id="GO:0019843">
    <property type="term" value="F:rRNA binding"/>
    <property type="evidence" value="ECO:0007669"/>
    <property type="project" value="UniProtKB-UniRule"/>
</dbReference>
<dbReference type="GO" id="GO:0003735">
    <property type="term" value="F:structural constituent of ribosome"/>
    <property type="evidence" value="ECO:0007669"/>
    <property type="project" value="InterPro"/>
</dbReference>
<dbReference type="GO" id="GO:0000027">
    <property type="term" value="P:ribosomal large subunit assembly"/>
    <property type="evidence" value="ECO:0007669"/>
    <property type="project" value="UniProtKB-UniRule"/>
</dbReference>
<dbReference type="GO" id="GO:0006412">
    <property type="term" value="P:translation"/>
    <property type="evidence" value="ECO:0007669"/>
    <property type="project" value="InterPro"/>
</dbReference>
<dbReference type="CDD" id="cd07026">
    <property type="entry name" value="Ribosomal_L20"/>
    <property type="match status" value="1"/>
</dbReference>
<dbReference type="FunFam" id="1.10.1900.20:FF:000001">
    <property type="entry name" value="50S ribosomal protein L20"/>
    <property type="match status" value="1"/>
</dbReference>
<dbReference type="Gene3D" id="6.10.160.10">
    <property type="match status" value="1"/>
</dbReference>
<dbReference type="Gene3D" id="1.10.1900.20">
    <property type="entry name" value="Ribosomal protein L20"/>
    <property type="match status" value="1"/>
</dbReference>
<dbReference type="HAMAP" id="MF_00382">
    <property type="entry name" value="Ribosomal_bL20"/>
    <property type="match status" value="1"/>
</dbReference>
<dbReference type="InterPro" id="IPR005813">
    <property type="entry name" value="Ribosomal_bL20"/>
</dbReference>
<dbReference type="InterPro" id="IPR049946">
    <property type="entry name" value="RIBOSOMAL_L20_CS"/>
</dbReference>
<dbReference type="InterPro" id="IPR035566">
    <property type="entry name" value="Ribosomal_protein_bL20_C"/>
</dbReference>
<dbReference type="NCBIfam" id="TIGR01032">
    <property type="entry name" value="rplT_bact"/>
    <property type="match status" value="1"/>
</dbReference>
<dbReference type="PANTHER" id="PTHR10986">
    <property type="entry name" value="39S RIBOSOMAL PROTEIN L20"/>
    <property type="match status" value="1"/>
</dbReference>
<dbReference type="Pfam" id="PF00453">
    <property type="entry name" value="Ribosomal_L20"/>
    <property type="match status" value="1"/>
</dbReference>
<dbReference type="PRINTS" id="PR00062">
    <property type="entry name" value="RIBOSOMALL20"/>
</dbReference>
<dbReference type="SUPFAM" id="SSF74731">
    <property type="entry name" value="Ribosomal protein L20"/>
    <property type="match status" value="1"/>
</dbReference>
<dbReference type="PROSITE" id="PS00937">
    <property type="entry name" value="RIBOSOMAL_L20"/>
    <property type="match status" value="1"/>
</dbReference>
<protein>
    <recommendedName>
        <fullName evidence="1">Large ribosomal subunit protein bL20</fullName>
    </recommendedName>
    <alternativeName>
        <fullName evidence="2">50S ribosomal protein L20</fullName>
    </alternativeName>
</protein>
<sequence>MPRVKGGTVTRARRKKTIKLAKGYFGSKHTLYKVAKQQVMKSGQYAFRDRRQRKRDFRKLWITRINAAARQHEMSYSRLMNGLKKAGIDINRKMLSEIAISDEKAFAQLVTKAKDALK</sequence>